<sequence length="200" mass="20689">MAASAGPEIERLIALLSKLPGLGPRSGRRAALALLKKRDTLLAPLTAALVDAQAKVRTCSVCGSLDTSDPCAICSDAARDNRLLCVVEEVGSLWAMERGGSFKGRYHVLGGLLSALDGVGPEALRVGELLGRAKGGEVSEVILALPATVDGQTTAHYLADRLAPTGVSVTMLARGVPVGGDLDWLDDGTIAQALRARRPA</sequence>
<name>RECR_CAUSK</name>
<organism>
    <name type="scientific">Caulobacter sp. (strain K31)</name>
    <dbReference type="NCBI Taxonomy" id="366602"/>
    <lineage>
        <taxon>Bacteria</taxon>
        <taxon>Pseudomonadati</taxon>
        <taxon>Pseudomonadota</taxon>
        <taxon>Alphaproteobacteria</taxon>
        <taxon>Caulobacterales</taxon>
        <taxon>Caulobacteraceae</taxon>
        <taxon>Caulobacter</taxon>
    </lineage>
</organism>
<keyword id="KW-0227">DNA damage</keyword>
<keyword id="KW-0233">DNA recombination</keyword>
<keyword id="KW-0234">DNA repair</keyword>
<keyword id="KW-0479">Metal-binding</keyword>
<keyword id="KW-0862">Zinc</keyword>
<keyword id="KW-0863">Zinc-finger</keyword>
<evidence type="ECO:0000255" key="1">
    <source>
        <dbReference type="HAMAP-Rule" id="MF_00017"/>
    </source>
</evidence>
<gene>
    <name evidence="1" type="primary">recR</name>
    <name type="ordered locus">Caul_4573</name>
</gene>
<accession>B0T1T2</accession>
<reference key="1">
    <citation type="submission" date="2008-01" db="EMBL/GenBank/DDBJ databases">
        <title>Complete sequence of chromosome of Caulobacter sp. K31.</title>
        <authorList>
            <consortium name="US DOE Joint Genome Institute"/>
            <person name="Copeland A."/>
            <person name="Lucas S."/>
            <person name="Lapidus A."/>
            <person name="Barry K."/>
            <person name="Glavina del Rio T."/>
            <person name="Dalin E."/>
            <person name="Tice H."/>
            <person name="Pitluck S."/>
            <person name="Bruce D."/>
            <person name="Goodwin L."/>
            <person name="Thompson L.S."/>
            <person name="Brettin T."/>
            <person name="Detter J.C."/>
            <person name="Han C."/>
            <person name="Schmutz J."/>
            <person name="Larimer F."/>
            <person name="Land M."/>
            <person name="Hauser L."/>
            <person name="Kyrpides N."/>
            <person name="Kim E."/>
            <person name="Stephens C."/>
            <person name="Richardson P."/>
        </authorList>
    </citation>
    <scope>NUCLEOTIDE SEQUENCE [LARGE SCALE GENOMIC DNA]</scope>
    <source>
        <strain>K31</strain>
    </source>
</reference>
<comment type="function">
    <text evidence="1">May play a role in DNA repair. It seems to be involved in an RecBC-independent recombinational process of DNA repair. It may act with RecF and RecO.</text>
</comment>
<comment type="similarity">
    <text evidence="1">Belongs to the RecR family.</text>
</comment>
<dbReference type="EMBL" id="CP000927">
    <property type="protein sequence ID" value="ABZ73693.1"/>
    <property type="molecule type" value="Genomic_DNA"/>
</dbReference>
<dbReference type="SMR" id="B0T1T2"/>
<dbReference type="STRING" id="366602.Caul_4573"/>
<dbReference type="KEGG" id="cak:Caul_4573"/>
<dbReference type="eggNOG" id="COG0353">
    <property type="taxonomic scope" value="Bacteria"/>
</dbReference>
<dbReference type="HOGENOM" id="CLU_060739_1_1_5"/>
<dbReference type="OrthoDB" id="9802672at2"/>
<dbReference type="GO" id="GO:0003677">
    <property type="term" value="F:DNA binding"/>
    <property type="evidence" value="ECO:0007669"/>
    <property type="project" value="UniProtKB-UniRule"/>
</dbReference>
<dbReference type="GO" id="GO:0008270">
    <property type="term" value="F:zinc ion binding"/>
    <property type="evidence" value="ECO:0007669"/>
    <property type="project" value="UniProtKB-KW"/>
</dbReference>
<dbReference type="GO" id="GO:0006310">
    <property type="term" value="P:DNA recombination"/>
    <property type="evidence" value="ECO:0007669"/>
    <property type="project" value="UniProtKB-UniRule"/>
</dbReference>
<dbReference type="GO" id="GO:0006281">
    <property type="term" value="P:DNA repair"/>
    <property type="evidence" value="ECO:0007669"/>
    <property type="project" value="UniProtKB-UniRule"/>
</dbReference>
<dbReference type="CDD" id="cd01025">
    <property type="entry name" value="TOPRIM_recR"/>
    <property type="match status" value="1"/>
</dbReference>
<dbReference type="Gene3D" id="3.40.1360.10">
    <property type="match status" value="1"/>
</dbReference>
<dbReference type="Gene3D" id="6.10.250.240">
    <property type="match status" value="1"/>
</dbReference>
<dbReference type="Gene3D" id="1.10.8.420">
    <property type="entry name" value="RecR Domain 1"/>
    <property type="match status" value="1"/>
</dbReference>
<dbReference type="HAMAP" id="MF_00017">
    <property type="entry name" value="RecR"/>
    <property type="match status" value="1"/>
</dbReference>
<dbReference type="InterPro" id="IPR000093">
    <property type="entry name" value="DNA_Rcmb_RecR"/>
</dbReference>
<dbReference type="InterPro" id="IPR023627">
    <property type="entry name" value="Rcmb_RecR"/>
</dbReference>
<dbReference type="InterPro" id="IPR015967">
    <property type="entry name" value="Rcmb_RecR_Znf"/>
</dbReference>
<dbReference type="InterPro" id="IPR006171">
    <property type="entry name" value="TOPRIM_dom"/>
</dbReference>
<dbReference type="InterPro" id="IPR034137">
    <property type="entry name" value="TOPRIM_RecR"/>
</dbReference>
<dbReference type="NCBIfam" id="TIGR00615">
    <property type="entry name" value="recR"/>
    <property type="match status" value="1"/>
</dbReference>
<dbReference type="PANTHER" id="PTHR30446">
    <property type="entry name" value="RECOMBINATION PROTEIN RECR"/>
    <property type="match status" value="1"/>
</dbReference>
<dbReference type="PANTHER" id="PTHR30446:SF0">
    <property type="entry name" value="RECOMBINATION PROTEIN RECR"/>
    <property type="match status" value="1"/>
</dbReference>
<dbReference type="Pfam" id="PF21175">
    <property type="entry name" value="RecR_C"/>
    <property type="match status" value="1"/>
</dbReference>
<dbReference type="Pfam" id="PF21176">
    <property type="entry name" value="RecR_HhH"/>
    <property type="match status" value="1"/>
</dbReference>
<dbReference type="Pfam" id="PF02132">
    <property type="entry name" value="RecR_ZnF"/>
    <property type="match status" value="1"/>
</dbReference>
<dbReference type="Pfam" id="PF13662">
    <property type="entry name" value="Toprim_4"/>
    <property type="match status" value="1"/>
</dbReference>
<dbReference type="SUPFAM" id="SSF111304">
    <property type="entry name" value="Recombination protein RecR"/>
    <property type="match status" value="1"/>
</dbReference>
<dbReference type="PROSITE" id="PS01300">
    <property type="entry name" value="RECR"/>
    <property type="match status" value="1"/>
</dbReference>
<dbReference type="PROSITE" id="PS50880">
    <property type="entry name" value="TOPRIM"/>
    <property type="match status" value="1"/>
</dbReference>
<proteinExistence type="inferred from homology"/>
<protein>
    <recommendedName>
        <fullName evidence="1">Recombination protein RecR</fullName>
    </recommendedName>
</protein>
<feature type="chain" id="PRO_1000074114" description="Recombination protein RecR">
    <location>
        <begin position="1"/>
        <end position="200"/>
    </location>
</feature>
<feature type="domain" description="Toprim" evidence="1">
    <location>
        <begin position="82"/>
        <end position="177"/>
    </location>
</feature>
<feature type="zinc finger region" description="C4-type" evidence="1">
    <location>
        <begin position="59"/>
        <end position="74"/>
    </location>
</feature>